<sequence length="330" mass="37268">MLDFLAITLSGKPPQVIQGETVNLKWQWLGEGILTLVPHRSYTQSVVISAGIHGNETAPIEILNQLVTDLLAGQLPLSVRLLVLLGNPPAIRKGKRYLSNDINRMFGGRYQHYTPSDETRRASTLEQRVMAFFQASHTSERLHYDLHTAIRGSYHPRFGLLPYQQTPYSAAMFRWLRDIELDALVMHTSAGGTFAHFSSERCQAASCTLELGKALPFGENQLSQFSAITQGLRSLVSDSALPARKTENMKYYRVVKSLLRQHPDFKLRVAEDTVNFTRFAQGTLLTEQPNDNYRVEHPYEWILFPNPHVALGLRAGMMLVKMCESELPIT</sequence>
<organism>
    <name type="scientific">Yersinia pestis (strain Pestoides F)</name>
    <dbReference type="NCBI Taxonomy" id="386656"/>
    <lineage>
        <taxon>Bacteria</taxon>
        <taxon>Pseudomonadati</taxon>
        <taxon>Pseudomonadota</taxon>
        <taxon>Gammaproteobacteria</taxon>
        <taxon>Enterobacterales</taxon>
        <taxon>Yersiniaceae</taxon>
        <taxon>Yersinia</taxon>
    </lineage>
</organism>
<dbReference type="EC" id="3.5.1.96" evidence="1"/>
<dbReference type="EMBL" id="CP000668">
    <property type="protein sequence ID" value="ABP39555.1"/>
    <property type="molecule type" value="Genomic_DNA"/>
</dbReference>
<dbReference type="RefSeq" id="WP_002212028.1">
    <property type="nucleotide sequence ID" value="NZ_CP009715.1"/>
</dbReference>
<dbReference type="SMR" id="A4TJU3"/>
<dbReference type="GeneID" id="49786048"/>
<dbReference type="KEGG" id="ypp:YPDSF_1157"/>
<dbReference type="PATRIC" id="fig|386656.14.peg.2668"/>
<dbReference type="UniPathway" id="UPA00185">
    <property type="reaction ID" value="UER00283"/>
</dbReference>
<dbReference type="GO" id="GO:0016788">
    <property type="term" value="F:hydrolase activity, acting on ester bonds"/>
    <property type="evidence" value="ECO:0007669"/>
    <property type="project" value="UniProtKB-UniRule"/>
</dbReference>
<dbReference type="GO" id="GO:0009017">
    <property type="term" value="F:succinylglutamate desuccinylase activity"/>
    <property type="evidence" value="ECO:0007669"/>
    <property type="project" value="UniProtKB-EC"/>
</dbReference>
<dbReference type="GO" id="GO:0008270">
    <property type="term" value="F:zinc ion binding"/>
    <property type="evidence" value="ECO:0007669"/>
    <property type="project" value="UniProtKB-UniRule"/>
</dbReference>
<dbReference type="GO" id="GO:0019544">
    <property type="term" value="P:arginine catabolic process to glutamate"/>
    <property type="evidence" value="ECO:0007669"/>
    <property type="project" value="UniProtKB-UniRule"/>
</dbReference>
<dbReference type="GO" id="GO:0019545">
    <property type="term" value="P:arginine catabolic process to succinate"/>
    <property type="evidence" value="ECO:0007669"/>
    <property type="project" value="UniProtKB-UniRule"/>
</dbReference>
<dbReference type="CDD" id="cd03855">
    <property type="entry name" value="M14_ASTE"/>
    <property type="match status" value="1"/>
</dbReference>
<dbReference type="FunFam" id="3.40.630.10:FF:000017">
    <property type="entry name" value="Succinylglutamate desuccinylase"/>
    <property type="match status" value="1"/>
</dbReference>
<dbReference type="Gene3D" id="3.40.630.10">
    <property type="entry name" value="Zn peptidases"/>
    <property type="match status" value="1"/>
</dbReference>
<dbReference type="HAMAP" id="MF_00767">
    <property type="entry name" value="Arg_catab_AstE"/>
    <property type="match status" value="1"/>
</dbReference>
<dbReference type="InterPro" id="IPR050178">
    <property type="entry name" value="AspA/AstE_fam"/>
</dbReference>
<dbReference type="InterPro" id="IPR055438">
    <property type="entry name" value="AstE_AspA_cat"/>
</dbReference>
<dbReference type="InterPro" id="IPR007036">
    <property type="entry name" value="Aste_AspA_hybrid_dom"/>
</dbReference>
<dbReference type="InterPro" id="IPR016681">
    <property type="entry name" value="SuccinylGlu_desuccinylase"/>
</dbReference>
<dbReference type="NCBIfam" id="TIGR03242">
    <property type="entry name" value="arg_catab_astE"/>
    <property type="match status" value="1"/>
</dbReference>
<dbReference type="NCBIfam" id="NF003706">
    <property type="entry name" value="PRK05324.1"/>
    <property type="match status" value="1"/>
</dbReference>
<dbReference type="PANTHER" id="PTHR15162">
    <property type="entry name" value="ASPARTOACYLASE"/>
    <property type="match status" value="1"/>
</dbReference>
<dbReference type="PANTHER" id="PTHR15162:SF7">
    <property type="entry name" value="SUCCINYLGLUTAMATE DESUCCINYLASE"/>
    <property type="match status" value="1"/>
</dbReference>
<dbReference type="Pfam" id="PF24827">
    <property type="entry name" value="AstE_AspA_cat"/>
    <property type="match status" value="1"/>
</dbReference>
<dbReference type="Pfam" id="PF04952">
    <property type="entry name" value="AstE_AspA_hybrid"/>
    <property type="match status" value="1"/>
</dbReference>
<dbReference type="PIRSF" id="PIRSF017020">
    <property type="entry name" value="AstE"/>
    <property type="match status" value="1"/>
</dbReference>
<dbReference type="SUPFAM" id="SSF53187">
    <property type="entry name" value="Zn-dependent exopeptidases"/>
    <property type="match status" value="1"/>
</dbReference>
<reference key="1">
    <citation type="submission" date="2007-02" db="EMBL/GenBank/DDBJ databases">
        <title>Complete sequence of chromosome of Yersinia pestis Pestoides F.</title>
        <authorList>
            <consortium name="US DOE Joint Genome Institute"/>
            <person name="Copeland A."/>
            <person name="Lucas S."/>
            <person name="Lapidus A."/>
            <person name="Barry K."/>
            <person name="Detter J.C."/>
            <person name="Glavina del Rio T."/>
            <person name="Hammon N."/>
            <person name="Israni S."/>
            <person name="Dalin E."/>
            <person name="Tice H."/>
            <person name="Pitluck S."/>
            <person name="Di Bartolo G."/>
            <person name="Chain P."/>
            <person name="Malfatti S."/>
            <person name="Shin M."/>
            <person name="Vergez L."/>
            <person name="Schmutz J."/>
            <person name="Larimer F."/>
            <person name="Land M."/>
            <person name="Hauser L."/>
            <person name="Worsham P."/>
            <person name="Chu M."/>
            <person name="Bearden S."/>
            <person name="Garcia E."/>
            <person name="Richardson P."/>
        </authorList>
    </citation>
    <scope>NUCLEOTIDE SEQUENCE [LARGE SCALE GENOMIC DNA]</scope>
    <source>
        <strain>Pestoides F</strain>
    </source>
</reference>
<comment type="function">
    <text evidence="1">Transforms N(2)-succinylglutamate into succinate and glutamate.</text>
</comment>
<comment type="catalytic activity">
    <reaction evidence="1">
        <text>N-succinyl-L-glutamate + H2O = L-glutamate + succinate</text>
        <dbReference type="Rhea" id="RHEA:15169"/>
        <dbReference type="ChEBI" id="CHEBI:15377"/>
        <dbReference type="ChEBI" id="CHEBI:29985"/>
        <dbReference type="ChEBI" id="CHEBI:30031"/>
        <dbReference type="ChEBI" id="CHEBI:58763"/>
        <dbReference type="EC" id="3.5.1.96"/>
    </reaction>
</comment>
<comment type="cofactor">
    <cofactor evidence="1">
        <name>Zn(2+)</name>
        <dbReference type="ChEBI" id="CHEBI:29105"/>
    </cofactor>
    <text evidence="1">Binds 1 zinc ion per subunit.</text>
</comment>
<comment type="pathway">
    <text evidence="1">Amino-acid degradation; L-arginine degradation via AST pathway; L-glutamate and succinate from L-arginine: step 5/5.</text>
</comment>
<comment type="similarity">
    <text evidence="1">Belongs to the AspA/AstE family. Succinylglutamate desuccinylase subfamily.</text>
</comment>
<name>ASTE_YERPP</name>
<feature type="chain" id="PRO_1000017335" description="Succinylglutamate desuccinylase">
    <location>
        <begin position="1"/>
        <end position="330"/>
    </location>
</feature>
<feature type="active site" evidence="1">
    <location>
        <position position="210"/>
    </location>
</feature>
<feature type="binding site" evidence="1">
    <location>
        <position position="53"/>
    </location>
    <ligand>
        <name>Zn(2+)</name>
        <dbReference type="ChEBI" id="CHEBI:29105"/>
    </ligand>
</feature>
<feature type="binding site" evidence="1">
    <location>
        <position position="56"/>
    </location>
    <ligand>
        <name>Zn(2+)</name>
        <dbReference type="ChEBI" id="CHEBI:29105"/>
    </ligand>
</feature>
<feature type="binding site" evidence="1">
    <location>
        <position position="147"/>
    </location>
    <ligand>
        <name>Zn(2+)</name>
        <dbReference type="ChEBI" id="CHEBI:29105"/>
    </ligand>
</feature>
<gene>
    <name evidence="1" type="primary">astE</name>
    <name type="ordered locus">YPDSF_1157</name>
</gene>
<evidence type="ECO:0000255" key="1">
    <source>
        <dbReference type="HAMAP-Rule" id="MF_00767"/>
    </source>
</evidence>
<accession>A4TJU3</accession>
<protein>
    <recommendedName>
        <fullName evidence="1">Succinylglutamate desuccinylase</fullName>
        <ecNumber evidence="1">3.5.1.96</ecNumber>
    </recommendedName>
</protein>
<keyword id="KW-0056">Arginine metabolism</keyword>
<keyword id="KW-0378">Hydrolase</keyword>
<keyword id="KW-0479">Metal-binding</keyword>
<keyword id="KW-0862">Zinc</keyword>
<proteinExistence type="inferred from homology"/>